<organism>
    <name type="scientific">Drosophila melanogaster</name>
    <name type="common">Fruit fly</name>
    <dbReference type="NCBI Taxonomy" id="7227"/>
    <lineage>
        <taxon>Eukaryota</taxon>
        <taxon>Metazoa</taxon>
        <taxon>Ecdysozoa</taxon>
        <taxon>Arthropoda</taxon>
        <taxon>Hexapoda</taxon>
        <taxon>Insecta</taxon>
        <taxon>Pterygota</taxon>
        <taxon>Neoptera</taxon>
        <taxon>Endopterygota</taxon>
        <taxon>Diptera</taxon>
        <taxon>Brachycera</taxon>
        <taxon>Muscomorpha</taxon>
        <taxon>Ephydroidea</taxon>
        <taxon>Drosophilidae</taxon>
        <taxon>Drosophila</taxon>
        <taxon>Sophophora</taxon>
    </lineage>
</organism>
<accession>P35554</accession>
<accession>Q9VW65</accession>
<protein>
    <recommendedName>
        <fullName>Flightin</fullName>
    </recommendedName>
    <alternativeName>
        <fullName>Muscle protein 27</fullName>
    </alternativeName>
</protein>
<keyword id="KW-0002">3D-structure</keyword>
<keyword id="KW-0514">Muscle protein</keyword>
<keyword id="KW-0597">Phosphoprotein</keyword>
<keyword id="KW-1185">Reference proteome</keyword>
<feature type="chain" id="PRO_0000087363" description="Flightin">
    <location>
        <begin position="1"/>
        <end position="182"/>
    </location>
</feature>
<feature type="region of interest" description="Disordered" evidence="1">
    <location>
        <begin position="1"/>
        <end position="76"/>
    </location>
</feature>
<feature type="compositionally biased region" description="Acidic residues" evidence="1">
    <location>
        <begin position="1"/>
        <end position="15"/>
    </location>
</feature>
<gene>
    <name type="primary">fln</name>
    <name type="synonym">FTN</name>
    <name type="synonym">mp27</name>
    <name type="ORF">CG7445</name>
</gene>
<proteinExistence type="evidence at protein level"/>
<sequence length="182" mass="20656">MADEEDPWGFDDGGEEEKAASTQAGTPAPPSKAPSVASDHKADSVVAGTPANEEAAPEEVEEIKAPPPPPEDDGYRKPVQLYRHWVRPKFLQYKYMYNYRTNYYDDVIDYIDKKQTGVAREIPRPQTWAERVLRTRNISGSDIDSYAPAKRDKQLIQTLAASIRTYNYHTKAYINQRYASVL</sequence>
<evidence type="ECO:0000256" key="1">
    <source>
        <dbReference type="SAM" id="MobiDB-lite"/>
    </source>
</evidence>
<comment type="function">
    <text>Possibly involved in the regulation of flight muscles contraction, possibly by modulating actin-myosin interaction.</text>
</comment>
<comment type="tissue specificity">
    <text>Found only in indirect flight muscles (IFM).</text>
</comment>
<comment type="developmental stage">
    <text>Expressed in late pupal and adult stages.</text>
</comment>
<comment type="PTM">
    <text>Several forms of flightin are thought to be produced through post-translational modifications, possibly by phosphorylation.</text>
</comment>
<reference key="1">
    <citation type="journal article" date="1993" name="J. Cell Biol.">
        <title>Flightin, a novel myofibrillar protein of Drosophila stretch-activated muscles.</title>
        <authorList>
            <person name="Vigoreaux J.O."/>
            <person name="Saide J.D."/>
            <person name="Valgeirsdottir K."/>
            <person name="Pardue M.L."/>
        </authorList>
    </citation>
    <scope>NUCLEOTIDE SEQUENCE [MRNA]</scope>
    <source>
        <tissue>Flight muscle</tissue>
    </source>
</reference>
<reference key="2">
    <citation type="journal article" date="2000" name="Science">
        <title>The genome sequence of Drosophila melanogaster.</title>
        <authorList>
            <person name="Adams M.D."/>
            <person name="Celniker S.E."/>
            <person name="Holt R.A."/>
            <person name="Evans C.A."/>
            <person name="Gocayne J.D."/>
            <person name="Amanatides P.G."/>
            <person name="Scherer S.E."/>
            <person name="Li P.W."/>
            <person name="Hoskins R.A."/>
            <person name="Galle R.F."/>
            <person name="George R.A."/>
            <person name="Lewis S.E."/>
            <person name="Richards S."/>
            <person name="Ashburner M."/>
            <person name="Henderson S.N."/>
            <person name="Sutton G.G."/>
            <person name="Wortman J.R."/>
            <person name="Yandell M.D."/>
            <person name="Zhang Q."/>
            <person name="Chen L.X."/>
            <person name="Brandon R.C."/>
            <person name="Rogers Y.-H.C."/>
            <person name="Blazej R.G."/>
            <person name="Champe M."/>
            <person name="Pfeiffer B.D."/>
            <person name="Wan K.H."/>
            <person name="Doyle C."/>
            <person name="Baxter E.G."/>
            <person name="Helt G."/>
            <person name="Nelson C.R."/>
            <person name="Miklos G.L.G."/>
            <person name="Abril J.F."/>
            <person name="Agbayani A."/>
            <person name="An H.-J."/>
            <person name="Andrews-Pfannkoch C."/>
            <person name="Baldwin D."/>
            <person name="Ballew R.M."/>
            <person name="Basu A."/>
            <person name="Baxendale J."/>
            <person name="Bayraktaroglu L."/>
            <person name="Beasley E.M."/>
            <person name="Beeson K.Y."/>
            <person name="Benos P.V."/>
            <person name="Berman B.P."/>
            <person name="Bhandari D."/>
            <person name="Bolshakov S."/>
            <person name="Borkova D."/>
            <person name="Botchan M.R."/>
            <person name="Bouck J."/>
            <person name="Brokstein P."/>
            <person name="Brottier P."/>
            <person name="Burtis K.C."/>
            <person name="Busam D.A."/>
            <person name="Butler H."/>
            <person name="Cadieu E."/>
            <person name="Center A."/>
            <person name="Chandra I."/>
            <person name="Cherry J.M."/>
            <person name="Cawley S."/>
            <person name="Dahlke C."/>
            <person name="Davenport L.B."/>
            <person name="Davies P."/>
            <person name="de Pablos B."/>
            <person name="Delcher A."/>
            <person name="Deng Z."/>
            <person name="Mays A.D."/>
            <person name="Dew I."/>
            <person name="Dietz S.M."/>
            <person name="Dodson K."/>
            <person name="Doup L.E."/>
            <person name="Downes M."/>
            <person name="Dugan-Rocha S."/>
            <person name="Dunkov B.C."/>
            <person name="Dunn P."/>
            <person name="Durbin K.J."/>
            <person name="Evangelista C.C."/>
            <person name="Ferraz C."/>
            <person name="Ferriera S."/>
            <person name="Fleischmann W."/>
            <person name="Fosler C."/>
            <person name="Gabrielian A.E."/>
            <person name="Garg N.S."/>
            <person name="Gelbart W.M."/>
            <person name="Glasser K."/>
            <person name="Glodek A."/>
            <person name="Gong F."/>
            <person name="Gorrell J.H."/>
            <person name="Gu Z."/>
            <person name="Guan P."/>
            <person name="Harris M."/>
            <person name="Harris N.L."/>
            <person name="Harvey D.A."/>
            <person name="Heiman T.J."/>
            <person name="Hernandez J.R."/>
            <person name="Houck J."/>
            <person name="Hostin D."/>
            <person name="Houston K.A."/>
            <person name="Howland T.J."/>
            <person name="Wei M.-H."/>
            <person name="Ibegwam C."/>
            <person name="Jalali M."/>
            <person name="Kalush F."/>
            <person name="Karpen G.H."/>
            <person name="Ke Z."/>
            <person name="Kennison J.A."/>
            <person name="Ketchum K.A."/>
            <person name="Kimmel B.E."/>
            <person name="Kodira C.D."/>
            <person name="Kraft C.L."/>
            <person name="Kravitz S."/>
            <person name="Kulp D."/>
            <person name="Lai Z."/>
            <person name="Lasko P."/>
            <person name="Lei Y."/>
            <person name="Levitsky A.A."/>
            <person name="Li J.H."/>
            <person name="Li Z."/>
            <person name="Liang Y."/>
            <person name="Lin X."/>
            <person name="Liu X."/>
            <person name="Mattei B."/>
            <person name="McIntosh T.C."/>
            <person name="McLeod M.P."/>
            <person name="McPherson D."/>
            <person name="Merkulov G."/>
            <person name="Milshina N.V."/>
            <person name="Mobarry C."/>
            <person name="Morris J."/>
            <person name="Moshrefi A."/>
            <person name="Mount S.M."/>
            <person name="Moy M."/>
            <person name="Murphy B."/>
            <person name="Murphy L."/>
            <person name="Muzny D.M."/>
            <person name="Nelson D.L."/>
            <person name="Nelson D.R."/>
            <person name="Nelson K.A."/>
            <person name="Nixon K."/>
            <person name="Nusskern D.R."/>
            <person name="Pacleb J.M."/>
            <person name="Palazzolo M."/>
            <person name="Pittman G.S."/>
            <person name="Pan S."/>
            <person name="Pollard J."/>
            <person name="Puri V."/>
            <person name="Reese M.G."/>
            <person name="Reinert K."/>
            <person name="Remington K."/>
            <person name="Saunders R.D.C."/>
            <person name="Scheeler F."/>
            <person name="Shen H."/>
            <person name="Shue B.C."/>
            <person name="Siden-Kiamos I."/>
            <person name="Simpson M."/>
            <person name="Skupski M.P."/>
            <person name="Smith T.J."/>
            <person name="Spier E."/>
            <person name="Spradling A.C."/>
            <person name="Stapleton M."/>
            <person name="Strong R."/>
            <person name="Sun E."/>
            <person name="Svirskas R."/>
            <person name="Tector C."/>
            <person name="Turner R."/>
            <person name="Venter E."/>
            <person name="Wang A.H."/>
            <person name="Wang X."/>
            <person name="Wang Z.-Y."/>
            <person name="Wassarman D.A."/>
            <person name="Weinstock G.M."/>
            <person name="Weissenbach J."/>
            <person name="Williams S.M."/>
            <person name="Woodage T."/>
            <person name="Worley K.C."/>
            <person name="Wu D."/>
            <person name="Yang S."/>
            <person name="Yao Q.A."/>
            <person name="Ye J."/>
            <person name="Yeh R.-F."/>
            <person name="Zaveri J.S."/>
            <person name="Zhan M."/>
            <person name="Zhang G."/>
            <person name="Zhao Q."/>
            <person name="Zheng L."/>
            <person name="Zheng X.H."/>
            <person name="Zhong F.N."/>
            <person name="Zhong W."/>
            <person name="Zhou X."/>
            <person name="Zhu S.C."/>
            <person name="Zhu X."/>
            <person name="Smith H.O."/>
            <person name="Gibbs R.A."/>
            <person name="Myers E.W."/>
            <person name="Rubin G.M."/>
            <person name="Venter J.C."/>
        </authorList>
    </citation>
    <scope>NUCLEOTIDE SEQUENCE [LARGE SCALE GENOMIC DNA]</scope>
    <source>
        <strain>Berkeley</strain>
    </source>
</reference>
<reference key="3">
    <citation type="journal article" date="2002" name="Genome Biol.">
        <title>Annotation of the Drosophila melanogaster euchromatic genome: a systematic review.</title>
        <authorList>
            <person name="Misra S."/>
            <person name="Crosby M.A."/>
            <person name="Mungall C.J."/>
            <person name="Matthews B.B."/>
            <person name="Campbell K.S."/>
            <person name="Hradecky P."/>
            <person name="Huang Y."/>
            <person name="Kaminker J.S."/>
            <person name="Millburn G.H."/>
            <person name="Prochnik S.E."/>
            <person name="Smith C.D."/>
            <person name="Tupy J.L."/>
            <person name="Whitfield E.J."/>
            <person name="Bayraktaroglu L."/>
            <person name="Berman B.P."/>
            <person name="Bettencourt B.R."/>
            <person name="Celniker S.E."/>
            <person name="de Grey A.D.N.J."/>
            <person name="Drysdale R.A."/>
            <person name="Harris N.L."/>
            <person name="Richter J."/>
            <person name="Russo S."/>
            <person name="Schroeder A.J."/>
            <person name="Shu S.Q."/>
            <person name="Stapleton M."/>
            <person name="Yamada C."/>
            <person name="Ashburner M."/>
            <person name="Gelbart W.M."/>
            <person name="Rubin G.M."/>
            <person name="Lewis S.E."/>
        </authorList>
    </citation>
    <scope>GENOME REANNOTATION</scope>
    <source>
        <strain>Berkeley</strain>
    </source>
</reference>
<reference key="4">
    <citation type="journal article" date="2002" name="Genome Biol.">
        <title>A Drosophila full-length cDNA resource.</title>
        <authorList>
            <person name="Stapleton M."/>
            <person name="Carlson J.W."/>
            <person name="Brokstein P."/>
            <person name="Yu C."/>
            <person name="Champe M."/>
            <person name="George R.A."/>
            <person name="Guarin H."/>
            <person name="Kronmiller B."/>
            <person name="Pacleb J.M."/>
            <person name="Park S."/>
            <person name="Wan K.H."/>
            <person name="Rubin G.M."/>
            <person name="Celniker S.E."/>
        </authorList>
    </citation>
    <scope>NUCLEOTIDE SEQUENCE [LARGE SCALE MRNA]</scope>
    <source>
        <strain>Berkeley</strain>
        <tissue>Ovary</tissue>
    </source>
</reference>
<name>FTN_DROME</name>
<dbReference type="EMBL" id="Z18858">
    <property type="protein sequence ID" value="CAA79309.1"/>
    <property type="molecule type" value="mRNA"/>
</dbReference>
<dbReference type="EMBL" id="AE014296">
    <property type="protein sequence ID" value="AAF49084.1"/>
    <property type="molecule type" value="Genomic_DNA"/>
</dbReference>
<dbReference type="EMBL" id="AY060802">
    <property type="protein sequence ID" value="AAL28350.1"/>
    <property type="molecule type" value="mRNA"/>
</dbReference>
<dbReference type="PIR" id="A46436">
    <property type="entry name" value="A46436"/>
</dbReference>
<dbReference type="RefSeq" id="NP_001262084.1">
    <property type="nucleotide sequence ID" value="NM_001275155.1"/>
</dbReference>
<dbReference type="RefSeq" id="NP_524174.1">
    <property type="nucleotide sequence ID" value="NM_079450.4"/>
</dbReference>
<dbReference type="PDB" id="8U8H">
    <property type="method" value="EM"/>
    <property type="resolution" value="4.70 A"/>
    <property type="chains" value="A=1-182"/>
</dbReference>
<dbReference type="PDBsum" id="8U8H"/>
<dbReference type="EMDB" id="EMD-42024"/>
<dbReference type="SMR" id="P35554"/>
<dbReference type="BioGRID" id="65452">
    <property type="interactions" value="19"/>
</dbReference>
<dbReference type="FunCoup" id="P35554">
    <property type="interactions" value="58"/>
</dbReference>
<dbReference type="IntAct" id="P35554">
    <property type="interactions" value="45"/>
</dbReference>
<dbReference type="STRING" id="7227.FBpp0304969"/>
<dbReference type="iPTMnet" id="P35554"/>
<dbReference type="PaxDb" id="7227-FBpp0074679"/>
<dbReference type="DNASU" id="40185"/>
<dbReference type="EnsemblMetazoa" id="FBtr0074910">
    <property type="protein sequence ID" value="FBpp0074679"/>
    <property type="gene ID" value="FBgn0005633"/>
</dbReference>
<dbReference type="EnsemblMetazoa" id="FBtr0332723">
    <property type="protein sequence ID" value="FBpp0304969"/>
    <property type="gene ID" value="FBgn0005633"/>
</dbReference>
<dbReference type="GeneID" id="40185"/>
<dbReference type="KEGG" id="dme:Dmel_CG7445"/>
<dbReference type="UCSC" id="CG7445-RA">
    <property type="organism name" value="d. melanogaster"/>
</dbReference>
<dbReference type="AGR" id="FB:FBgn0005633"/>
<dbReference type="CTD" id="40185"/>
<dbReference type="FlyBase" id="FBgn0005633">
    <property type="gene designation" value="fln"/>
</dbReference>
<dbReference type="VEuPathDB" id="VectorBase:FBgn0005633"/>
<dbReference type="eggNOG" id="ENOG502S9XB">
    <property type="taxonomic scope" value="Eukaryota"/>
</dbReference>
<dbReference type="HOGENOM" id="CLU_120629_0_0_1"/>
<dbReference type="InParanoid" id="P35554"/>
<dbReference type="OMA" id="YHTRAYY"/>
<dbReference type="OrthoDB" id="6344929at2759"/>
<dbReference type="PhylomeDB" id="P35554"/>
<dbReference type="SignaLink" id="P35554"/>
<dbReference type="BioGRID-ORCS" id="40185">
    <property type="hits" value="0 hits in 1 CRISPR screen"/>
</dbReference>
<dbReference type="ChiTaRS" id="cher">
    <property type="organism name" value="fly"/>
</dbReference>
<dbReference type="GenomeRNAi" id="40185"/>
<dbReference type="PRO" id="PR:P35554"/>
<dbReference type="Proteomes" id="UP000000803">
    <property type="component" value="Chromosome 3L"/>
</dbReference>
<dbReference type="Bgee" id="FBgn0005633">
    <property type="expression patterns" value="Expressed in second segment of antenna (Drosophila) and 27 other cell types or tissues"/>
</dbReference>
<dbReference type="ExpressionAtlas" id="P35554">
    <property type="expression patterns" value="baseline and differential"/>
</dbReference>
<dbReference type="GO" id="GO:0031672">
    <property type="term" value="C:A band"/>
    <property type="evidence" value="ECO:0000314"/>
    <property type="project" value="FlyBase"/>
</dbReference>
<dbReference type="GO" id="GO:0005863">
    <property type="term" value="C:striated muscle myosin thick filament"/>
    <property type="evidence" value="ECO:0000314"/>
    <property type="project" value="FlyBase"/>
</dbReference>
<dbReference type="GO" id="GO:0008307">
    <property type="term" value="F:structural constituent of muscle"/>
    <property type="evidence" value="ECO:0000315"/>
    <property type="project" value="FlyBase"/>
</dbReference>
<dbReference type="GO" id="GO:0097493">
    <property type="term" value="F:structural molecule activity conferring elasticity"/>
    <property type="evidence" value="ECO:0000315"/>
    <property type="project" value="FlyBase"/>
</dbReference>
<dbReference type="GO" id="GO:0007527">
    <property type="term" value="P:adult somatic muscle development"/>
    <property type="evidence" value="ECO:0000315"/>
    <property type="project" value="FlyBase"/>
</dbReference>
<dbReference type="GO" id="GO:0014703">
    <property type="term" value="P:oscillatory muscle contraction"/>
    <property type="evidence" value="ECO:0000315"/>
    <property type="project" value="FlyBase"/>
</dbReference>
<dbReference type="GO" id="GO:0045214">
    <property type="term" value="P:sarcomere organization"/>
    <property type="evidence" value="ECO:0000315"/>
    <property type="project" value="FlyBase"/>
</dbReference>
<dbReference type="GO" id="GO:0071688">
    <property type="term" value="P:striated muscle myosin thick filament assembly"/>
    <property type="evidence" value="ECO:0000314"/>
    <property type="project" value="FlyBase"/>
</dbReference>